<feature type="chain" id="PRO_0000314604" description="UDP-glucose 4-epimerase">
    <location>
        <begin position="1"/>
        <end position="341"/>
    </location>
</feature>
<keyword id="KW-0413">Isomerase</keyword>
<keyword id="KW-0448">Lipopolysaccharide biosynthesis</keyword>
<sequence>MFVDKTLMITGGTGSFGNAVLSRFLKSDITNDIKEIRIFSRDEKKQEDMRIALNNPKLKFYIGDVRNYKSIDEAMHGVDYVFHAAALKQVPTCEFYPMEAINTNVLGAENVLSAAINNKVAKVIVLSTDKAVYPINAMGLSKALMEKLAVAKARMRSQGETVLCVTRYGNVMASRGSVIPLFINQIKQDKDLTITEPSMTRFLMSLVDSVDLVLYAFEHGRQGDIFVQKSPASTIEVLAKALQEIFGSKNELRFIGTRHGEKHYESLVSSEEMAKADDLGGYYRIPMDGRDLNYAKYFVEGEKKVALLEDYNSHNTKRLNLEEVKELLLNLDYVQEELKNA</sequence>
<comment type="function">
    <text evidence="1">Epimerizes UDP-galactose to UDP-glucose.</text>
</comment>
<comment type="catalytic activity">
    <reaction>
        <text>UDP-alpha-D-glucose = UDP-alpha-D-galactose</text>
        <dbReference type="Rhea" id="RHEA:22168"/>
        <dbReference type="ChEBI" id="CHEBI:58885"/>
        <dbReference type="ChEBI" id="CHEBI:66914"/>
        <dbReference type="EC" id="5.1.3.2"/>
    </reaction>
</comment>
<comment type="similarity">
    <text evidence="2">Belongs to the polysaccharide synthase family.</text>
</comment>
<dbReference type="EC" id="5.1.3.2"/>
<dbReference type="EMBL" id="CP000053">
    <property type="protein sequence ID" value="AAY61390.1"/>
    <property type="molecule type" value="Genomic_DNA"/>
</dbReference>
<dbReference type="SMR" id="Q4UM33"/>
<dbReference type="STRING" id="315456.RF_0539"/>
<dbReference type="KEGG" id="rfe:RF_0539"/>
<dbReference type="eggNOG" id="COG1086">
    <property type="taxonomic scope" value="Bacteria"/>
</dbReference>
<dbReference type="HOGENOM" id="CLU_013560_4_1_5"/>
<dbReference type="OrthoDB" id="9803111at2"/>
<dbReference type="Proteomes" id="UP000008548">
    <property type="component" value="Chromosome"/>
</dbReference>
<dbReference type="GO" id="GO:0003978">
    <property type="term" value="F:UDP-glucose 4-epimerase activity"/>
    <property type="evidence" value="ECO:0007669"/>
    <property type="project" value="UniProtKB-EC"/>
</dbReference>
<dbReference type="GO" id="GO:0009103">
    <property type="term" value="P:lipopolysaccharide biosynthetic process"/>
    <property type="evidence" value="ECO:0007669"/>
    <property type="project" value="UniProtKB-KW"/>
</dbReference>
<dbReference type="CDD" id="cd05237">
    <property type="entry name" value="UDP_invert_4-6DH_SDR_e"/>
    <property type="match status" value="1"/>
</dbReference>
<dbReference type="Gene3D" id="3.40.50.720">
    <property type="entry name" value="NAD(P)-binding Rossmann-like Domain"/>
    <property type="match status" value="1"/>
</dbReference>
<dbReference type="InterPro" id="IPR013692">
    <property type="entry name" value="CapD_C"/>
</dbReference>
<dbReference type="InterPro" id="IPR036291">
    <property type="entry name" value="NAD(P)-bd_dom_sf"/>
</dbReference>
<dbReference type="InterPro" id="IPR003869">
    <property type="entry name" value="Polysac_CapD-like"/>
</dbReference>
<dbReference type="InterPro" id="IPR051203">
    <property type="entry name" value="Polysaccharide_Synthase-Rel"/>
</dbReference>
<dbReference type="PANTHER" id="PTHR43318">
    <property type="entry name" value="UDP-N-ACETYLGLUCOSAMINE 4,6-DEHYDRATASE"/>
    <property type="match status" value="1"/>
</dbReference>
<dbReference type="PANTHER" id="PTHR43318:SF2">
    <property type="entry name" value="UDP-N-ACETYLGLUCOSAMINE 4,6-DEHYDRATASE (INVERTING)"/>
    <property type="match status" value="1"/>
</dbReference>
<dbReference type="Pfam" id="PF08485">
    <property type="entry name" value="Polysacc_syn_2C"/>
    <property type="match status" value="1"/>
</dbReference>
<dbReference type="Pfam" id="PF02719">
    <property type="entry name" value="Polysacc_synt_2"/>
    <property type="match status" value="1"/>
</dbReference>
<dbReference type="SUPFAM" id="SSF51735">
    <property type="entry name" value="NAD(P)-binding Rossmann-fold domains"/>
    <property type="match status" value="1"/>
</dbReference>
<proteinExistence type="inferred from homology"/>
<reference key="1">
    <citation type="journal article" date="2005" name="PLoS Biol.">
        <title>The genome sequence of Rickettsia felis identifies the first putative conjugative plasmid in an obligate intracellular parasite.</title>
        <authorList>
            <person name="Ogata H."/>
            <person name="Renesto P."/>
            <person name="Audic S."/>
            <person name="Robert C."/>
            <person name="Blanc G."/>
            <person name="Fournier P.-E."/>
            <person name="Parinello H."/>
            <person name="Claverie J.-M."/>
            <person name="Raoult D."/>
        </authorList>
    </citation>
    <scope>NUCLEOTIDE SEQUENCE [LARGE SCALE GENOMIC DNA]</scope>
    <source>
        <strain>ATCC VR-1525 / URRWXCal2</strain>
    </source>
</reference>
<evidence type="ECO:0000250" key="1"/>
<evidence type="ECO:0000305" key="2"/>
<name>CAPD_RICFE</name>
<gene>
    <name type="primary">capD</name>
    <name type="ordered locus">RF_0539</name>
</gene>
<accession>Q4UM33</accession>
<protein>
    <recommendedName>
        <fullName>UDP-glucose 4-epimerase</fullName>
        <ecNumber>5.1.3.2</ecNumber>
    </recommendedName>
    <alternativeName>
        <fullName>Galactowaldenase</fullName>
    </alternativeName>
    <alternativeName>
        <fullName>UDP-galactose 4-epimerase</fullName>
    </alternativeName>
</protein>
<organism>
    <name type="scientific">Rickettsia felis (strain ATCC VR-1525 / URRWXCal2)</name>
    <name type="common">Rickettsia azadi</name>
    <dbReference type="NCBI Taxonomy" id="315456"/>
    <lineage>
        <taxon>Bacteria</taxon>
        <taxon>Pseudomonadati</taxon>
        <taxon>Pseudomonadota</taxon>
        <taxon>Alphaproteobacteria</taxon>
        <taxon>Rickettsiales</taxon>
        <taxon>Rickettsiaceae</taxon>
        <taxon>Rickettsieae</taxon>
        <taxon>Rickettsia</taxon>
        <taxon>spotted fever group</taxon>
    </lineage>
</organism>